<comment type="function">
    <text evidence="1">This enzyme is involved in nucleotide metabolism: it produces dUMP, the immediate precursor of thymidine nucleotides and it decreases the intracellular concentration of dUTP so that uracil cannot be incorporated into DNA.</text>
</comment>
<comment type="catalytic activity">
    <reaction evidence="1">
        <text>dUTP + H2O = dUMP + diphosphate + H(+)</text>
        <dbReference type="Rhea" id="RHEA:10248"/>
        <dbReference type="ChEBI" id="CHEBI:15377"/>
        <dbReference type="ChEBI" id="CHEBI:15378"/>
        <dbReference type="ChEBI" id="CHEBI:33019"/>
        <dbReference type="ChEBI" id="CHEBI:61555"/>
        <dbReference type="ChEBI" id="CHEBI:246422"/>
        <dbReference type="EC" id="3.6.1.23"/>
    </reaction>
</comment>
<comment type="cofactor">
    <cofactor evidence="1">
        <name>Mg(2+)</name>
        <dbReference type="ChEBI" id="CHEBI:18420"/>
    </cofactor>
</comment>
<comment type="pathway">
    <text evidence="1">Pyrimidine metabolism; dUMP biosynthesis; dUMP from dCTP (dUTP route): step 2/2.</text>
</comment>
<comment type="similarity">
    <text evidence="1">Belongs to the dUTPase family.</text>
</comment>
<dbReference type="EC" id="3.6.1.23" evidence="1"/>
<dbReference type="EMBL" id="AE001363">
    <property type="protein sequence ID" value="AAD18212.1"/>
    <property type="molecule type" value="Genomic_DNA"/>
</dbReference>
<dbReference type="EMBL" id="AE002161">
    <property type="protein sequence ID" value="AAF38522.1"/>
    <property type="molecule type" value="Genomic_DNA"/>
</dbReference>
<dbReference type="EMBL" id="BA000008">
    <property type="protein sequence ID" value="BAA98270.1"/>
    <property type="molecule type" value="Genomic_DNA"/>
</dbReference>
<dbReference type="EMBL" id="AE009440">
    <property type="protein sequence ID" value="AAP97993.1"/>
    <property type="molecule type" value="Genomic_DNA"/>
</dbReference>
<dbReference type="PIR" id="D72124">
    <property type="entry name" value="D72124"/>
</dbReference>
<dbReference type="PIR" id="D86498">
    <property type="entry name" value="D86498"/>
</dbReference>
<dbReference type="RefSeq" id="NP_224267.1">
    <property type="nucleotide sequence ID" value="NC_000922.1"/>
</dbReference>
<dbReference type="RefSeq" id="WP_010882709.1">
    <property type="nucleotide sequence ID" value="NZ_LN847257.1"/>
</dbReference>
<dbReference type="SMR" id="Q9Z9C2"/>
<dbReference type="STRING" id="406984.CPK_ORF00563"/>
<dbReference type="GeneID" id="45050103"/>
<dbReference type="KEGG" id="cpa:CP_0716"/>
<dbReference type="KEGG" id="cpj:dut"/>
<dbReference type="KEGG" id="cpn:CPn_0059"/>
<dbReference type="KEGG" id="cpt:CpB0060"/>
<dbReference type="PATRIC" id="fig|115713.3.peg.67"/>
<dbReference type="eggNOG" id="COG0756">
    <property type="taxonomic scope" value="Bacteria"/>
</dbReference>
<dbReference type="HOGENOM" id="CLU_068508_1_2_0"/>
<dbReference type="OMA" id="RSGMGHK"/>
<dbReference type="OrthoDB" id="9809956at2"/>
<dbReference type="UniPathway" id="UPA00610">
    <property type="reaction ID" value="UER00666"/>
</dbReference>
<dbReference type="Proteomes" id="UP000000583">
    <property type="component" value="Chromosome"/>
</dbReference>
<dbReference type="Proteomes" id="UP000000801">
    <property type="component" value="Chromosome"/>
</dbReference>
<dbReference type="GO" id="GO:0004170">
    <property type="term" value="F:dUTP diphosphatase activity"/>
    <property type="evidence" value="ECO:0007669"/>
    <property type="project" value="UniProtKB-UniRule"/>
</dbReference>
<dbReference type="GO" id="GO:0000287">
    <property type="term" value="F:magnesium ion binding"/>
    <property type="evidence" value="ECO:0007669"/>
    <property type="project" value="UniProtKB-UniRule"/>
</dbReference>
<dbReference type="GO" id="GO:0006226">
    <property type="term" value="P:dUMP biosynthetic process"/>
    <property type="evidence" value="ECO:0007669"/>
    <property type="project" value="UniProtKB-UniRule"/>
</dbReference>
<dbReference type="GO" id="GO:0046081">
    <property type="term" value="P:dUTP catabolic process"/>
    <property type="evidence" value="ECO:0007669"/>
    <property type="project" value="InterPro"/>
</dbReference>
<dbReference type="CDD" id="cd07557">
    <property type="entry name" value="trimeric_dUTPase"/>
    <property type="match status" value="1"/>
</dbReference>
<dbReference type="Gene3D" id="2.70.40.10">
    <property type="match status" value="1"/>
</dbReference>
<dbReference type="HAMAP" id="MF_00116">
    <property type="entry name" value="dUTPase_bact"/>
    <property type="match status" value="1"/>
</dbReference>
<dbReference type="InterPro" id="IPR008181">
    <property type="entry name" value="dUTPase"/>
</dbReference>
<dbReference type="InterPro" id="IPR029054">
    <property type="entry name" value="dUTPase-like"/>
</dbReference>
<dbReference type="InterPro" id="IPR036157">
    <property type="entry name" value="dUTPase-like_sf"/>
</dbReference>
<dbReference type="InterPro" id="IPR033704">
    <property type="entry name" value="dUTPase_trimeric"/>
</dbReference>
<dbReference type="NCBIfam" id="TIGR00576">
    <property type="entry name" value="dut"/>
    <property type="match status" value="1"/>
</dbReference>
<dbReference type="NCBIfam" id="NF001862">
    <property type="entry name" value="PRK00601.1"/>
    <property type="match status" value="1"/>
</dbReference>
<dbReference type="PANTHER" id="PTHR11241">
    <property type="entry name" value="DEOXYURIDINE 5'-TRIPHOSPHATE NUCLEOTIDOHYDROLASE"/>
    <property type="match status" value="1"/>
</dbReference>
<dbReference type="PANTHER" id="PTHR11241:SF0">
    <property type="entry name" value="DEOXYURIDINE 5'-TRIPHOSPHATE NUCLEOTIDOHYDROLASE"/>
    <property type="match status" value="1"/>
</dbReference>
<dbReference type="Pfam" id="PF00692">
    <property type="entry name" value="dUTPase"/>
    <property type="match status" value="1"/>
</dbReference>
<dbReference type="SUPFAM" id="SSF51283">
    <property type="entry name" value="dUTPase-like"/>
    <property type="match status" value="1"/>
</dbReference>
<proteinExistence type="inferred from homology"/>
<gene>
    <name evidence="1" type="primary">dut</name>
    <name type="ordered locus">CPn_0059</name>
    <name type="ordered locus">CP_0716</name>
    <name type="ordered locus">CpB0060</name>
</gene>
<protein>
    <recommendedName>
        <fullName evidence="1">Deoxyuridine 5'-triphosphate nucleotidohydrolase</fullName>
        <shortName evidence="1">dUTPase</shortName>
        <ecNumber evidence="1">3.6.1.23</ecNumber>
    </recommendedName>
    <alternativeName>
        <fullName evidence="1">dUTP pyrophosphatase</fullName>
    </alternativeName>
</protein>
<feature type="chain" id="PRO_0000182846" description="Deoxyuridine 5'-triphosphate nucleotidohydrolase">
    <location>
        <begin position="1"/>
        <end position="145"/>
    </location>
</feature>
<feature type="binding site" evidence="1">
    <location>
        <begin position="63"/>
        <end position="65"/>
    </location>
    <ligand>
        <name>substrate</name>
    </ligand>
</feature>
<feature type="binding site" evidence="1">
    <location>
        <position position="76"/>
    </location>
    <ligand>
        <name>substrate</name>
    </ligand>
</feature>
<feature type="binding site" evidence="1">
    <location>
        <begin position="80"/>
        <end position="82"/>
    </location>
    <ligand>
        <name>substrate</name>
    </ligand>
</feature>
<evidence type="ECO:0000255" key="1">
    <source>
        <dbReference type="HAMAP-Rule" id="MF_00116"/>
    </source>
</evidence>
<organism>
    <name type="scientific">Chlamydia pneumoniae</name>
    <name type="common">Chlamydophila pneumoniae</name>
    <dbReference type="NCBI Taxonomy" id="83558"/>
    <lineage>
        <taxon>Bacteria</taxon>
        <taxon>Pseudomonadati</taxon>
        <taxon>Chlamydiota</taxon>
        <taxon>Chlamydiia</taxon>
        <taxon>Chlamydiales</taxon>
        <taxon>Chlamydiaceae</taxon>
        <taxon>Chlamydia/Chlamydophila group</taxon>
        <taxon>Chlamydia</taxon>
    </lineage>
</organism>
<reference key="1">
    <citation type="journal article" date="1999" name="Nat. Genet.">
        <title>Comparative genomes of Chlamydia pneumoniae and C. trachomatis.</title>
        <authorList>
            <person name="Kalman S."/>
            <person name="Mitchell W.P."/>
            <person name="Marathe R."/>
            <person name="Lammel C.J."/>
            <person name="Fan J."/>
            <person name="Hyman R.W."/>
            <person name="Olinger L."/>
            <person name="Grimwood J."/>
            <person name="Davis R.W."/>
            <person name="Stephens R.S."/>
        </authorList>
    </citation>
    <scope>NUCLEOTIDE SEQUENCE [LARGE SCALE GENOMIC DNA]</scope>
    <source>
        <strain>CWL029</strain>
    </source>
</reference>
<reference key="2">
    <citation type="journal article" date="2000" name="Nucleic Acids Res.">
        <title>Genome sequences of Chlamydia trachomatis MoPn and Chlamydia pneumoniae AR39.</title>
        <authorList>
            <person name="Read T.D."/>
            <person name="Brunham R.C."/>
            <person name="Shen C."/>
            <person name="Gill S.R."/>
            <person name="Heidelberg J.F."/>
            <person name="White O."/>
            <person name="Hickey E.K."/>
            <person name="Peterson J.D."/>
            <person name="Utterback T.R."/>
            <person name="Berry K.J."/>
            <person name="Bass S."/>
            <person name="Linher K.D."/>
            <person name="Weidman J.F."/>
            <person name="Khouri H.M."/>
            <person name="Craven B."/>
            <person name="Bowman C."/>
            <person name="Dodson R.J."/>
            <person name="Gwinn M.L."/>
            <person name="Nelson W.C."/>
            <person name="DeBoy R.T."/>
            <person name="Kolonay J.F."/>
            <person name="McClarty G."/>
            <person name="Salzberg S.L."/>
            <person name="Eisen J.A."/>
            <person name="Fraser C.M."/>
        </authorList>
    </citation>
    <scope>NUCLEOTIDE SEQUENCE [LARGE SCALE GENOMIC DNA]</scope>
    <source>
        <strain>AR39</strain>
    </source>
</reference>
<reference key="3">
    <citation type="journal article" date="2000" name="Nucleic Acids Res.">
        <title>Comparison of whole genome sequences of Chlamydia pneumoniae J138 from Japan and CWL029 from USA.</title>
        <authorList>
            <person name="Shirai M."/>
            <person name="Hirakawa H."/>
            <person name="Kimoto M."/>
            <person name="Tabuchi M."/>
            <person name="Kishi F."/>
            <person name="Ouchi K."/>
            <person name="Shiba T."/>
            <person name="Ishii K."/>
            <person name="Hattori M."/>
            <person name="Kuhara S."/>
            <person name="Nakazawa T."/>
        </authorList>
    </citation>
    <scope>NUCLEOTIDE SEQUENCE [LARGE SCALE GENOMIC DNA]</scope>
    <source>
        <strain>J138</strain>
    </source>
</reference>
<reference key="4">
    <citation type="submission" date="2002-05" db="EMBL/GenBank/DDBJ databases">
        <title>The genome sequence of Chlamydia pneumoniae TW183 and comparison with other Chlamydia strains based on whole genome sequence analysis.</title>
        <authorList>
            <person name="Geng M.M."/>
            <person name="Schuhmacher A."/>
            <person name="Muehldorfer I."/>
            <person name="Bensch K.W."/>
            <person name="Schaefer K.P."/>
            <person name="Schneider S."/>
            <person name="Pohl T."/>
            <person name="Essig A."/>
            <person name="Marre R."/>
            <person name="Melchers K."/>
        </authorList>
    </citation>
    <scope>NUCLEOTIDE SEQUENCE [LARGE SCALE GENOMIC DNA]</scope>
    <source>
        <strain>TW-183</strain>
    </source>
</reference>
<accession>Q9Z9C2</accession>
<accession>Q9JQD0</accession>
<name>DUT_CHLPN</name>
<sequence>MTVFCELDSGGELPEYTTPGAAGADLRANIEEPIALLPGQRALIPTGIKAEIPEGYELQVRPRSGLALKHGITVLNSPGTIDSDYRGEIRVILINFGDSTFIIEPKMRIAQVVLSPVVQATFVVKQESLAETARGSGGFGHTGAS</sequence>
<keyword id="KW-0378">Hydrolase</keyword>
<keyword id="KW-0460">Magnesium</keyword>
<keyword id="KW-0479">Metal-binding</keyword>
<keyword id="KW-0546">Nucleotide metabolism</keyword>